<comment type="function">
    <text evidence="1">Component of the acetyl coenzyme A carboxylase (ACC) complex. First, biotin carboxylase catalyzes the carboxylation of biotin on its carrier protein (BCCP) and then the CO(2) group is transferred by the carboxyltransferase to acetyl-CoA to form malonyl-CoA.</text>
</comment>
<comment type="catalytic activity">
    <reaction evidence="1">
        <text>N(6)-carboxybiotinyl-L-lysyl-[protein] + acetyl-CoA = N(6)-biotinyl-L-lysyl-[protein] + malonyl-CoA</text>
        <dbReference type="Rhea" id="RHEA:54728"/>
        <dbReference type="Rhea" id="RHEA-COMP:10505"/>
        <dbReference type="Rhea" id="RHEA-COMP:10506"/>
        <dbReference type="ChEBI" id="CHEBI:57288"/>
        <dbReference type="ChEBI" id="CHEBI:57384"/>
        <dbReference type="ChEBI" id="CHEBI:83144"/>
        <dbReference type="ChEBI" id="CHEBI:83145"/>
        <dbReference type="EC" id="2.1.3.15"/>
    </reaction>
</comment>
<comment type="pathway">
    <text evidence="1">Lipid metabolism; malonyl-CoA biosynthesis; malonyl-CoA from acetyl-CoA: step 1/1.</text>
</comment>
<comment type="subunit">
    <text evidence="1">Acetyl-CoA carboxylase is a heterohexamer composed of biotin carboxyl carrier protein (AccB), biotin carboxylase (AccC) and two subunits each of ACCase subunit alpha (AccA) and ACCase subunit beta (AccD).</text>
</comment>
<comment type="subcellular location">
    <subcellularLocation>
        <location evidence="1">Cytoplasm</location>
    </subcellularLocation>
</comment>
<comment type="similarity">
    <text evidence="1">Belongs to the AccA family.</text>
</comment>
<gene>
    <name evidence="1" type="primary">accA</name>
    <name type="ordered locus">PSEEN4204</name>
</gene>
<protein>
    <recommendedName>
        <fullName evidence="1">Acetyl-coenzyme A carboxylase carboxyl transferase subunit alpha</fullName>
        <shortName evidence="1">ACCase subunit alpha</shortName>
        <shortName evidence="1">Acetyl-CoA carboxylase carboxyltransferase subunit alpha</shortName>
        <ecNumber evidence="1">2.1.3.15</ecNumber>
    </recommendedName>
</protein>
<dbReference type="EC" id="2.1.3.15" evidence="1"/>
<dbReference type="EMBL" id="CT573326">
    <property type="protein sequence ID" value="CAK16893.1"/>
    <property type="molecule type" value="Genomic_DNA"/>
</dbReference>
<dbReference type="RefSeq" id="WP_011535264.1">
    <property type="nucleotide sequence ID" value="NC_008027.1"/>
</dbReference>
<dbReference type="SMR" id="Q1I642"/>
<dbReference type="STRING" id="384676.PSEEN4204"/>
<dbReference type="GeneID" id="32807211"/>
<dbReference type="KEGG" id="pen:PSEEN4204"/>
<dbReference type="eggNOG" id="COG0825">
    <property type="taxonomic scope" value="Bacteria"/>
</dbReference>
<dbReference type="HOGENOM" id="CLU_015486_0_2_6"/>
<dbReference type="OrthoDB" id="9808023at2"/>
<dbReference type="UniPathway" id="UPA00655">
    <property type="reaction ID" value="UER00711"/>
</dbReference>
<dbReference type="Proteomes" id="UP000000658">
    <property type="component" value="Chromosome"/>
</dbReference>
<dbReference type="GO" id="GO:0009317">
    <property type="term" value="C:acetyl-CoA carboxylase complex"/>
    <property type="evidence" value="ECO:0007669"/>
    <property type="project" value="InterPro"/>
</dbReference>
<dbReference type="GO" id="GO:0003989">
    <property type="term" value="F:acetyl-CoA carboxylase activity"/>
    <property type="evidence" value="ECO:0007669"/>
    <property type="project" value="InterPro"/>
</dbReference>
<dbReference type="GO" id="GO:0005524">
    <property type="term" value="F:ATP binding"/>
    <property type="evidence" value="ECO:0007669"/>
    <property type="project" value="UniProtKB-KW"/>
</dbReference>
<dbReference type="GO" id="GO:0016743">
    <property type="term" value="F:carboxyl- or carbamoyltransferase activity"/>
    <property type="evidence" value="ECO:0007669"/>
    <property type="project" value="UniProtKB-UniRule"/>
</dbReference>
<dbReference type="GO" id="GO:0006633">
    <property type="term" value="P:fatty acid biosynthetic process"/>
    <property type="evidence" value="ECO:0007669"/>
    <property type="project" value="UniProtKB-KW"/>
</dbReference>
<dbReference type="GO" id="GO:2001295">
    <property type="term" value="P:malonyl-CoA biosynthetic process"/>
    <property type="evidence" value="ECO:0007669"/>
    <property type="project" value="UniProtKB-UniRule"/>
</dbReference>
<dbReference type="FunFam" id="3.90.226.10:FF:000008">
    <property type="entry name" value="Acetyl-coenzyme A carboxylase carboxyl transferase subunit alpha"/>
    <property type="match status" value="1"/>
</dbReference>
<dbReference type="Gene3D" id="3.90.226.10">
    <property type="entry name" value="2-enoyl-CoA Hydratase, Chain A, domain 1"/>
    <property type="match status" value="1"/>
</dbReference>
<dbReference type="HAMAP" id="MF_00823">
    <property type="entry name" value="AcetylCoA_CT_alpha"/>
    <property type="match status" value="1"/>
</dbReference>
<dbReference type="InterPro" id="IPR001095">
    <property type="entry name" value="Acetyl_CoA_COase_a_su"/>
</dbReference>
<dbReference type="InterPro" id="IPR029045">
    <property type="entry name" value="ClpP/crotonase-like_dom_sf"/>
</dbReference>
<dbReference type="InterPro" id="IPR011763">
    <property type="entry name" value="COA_CT_C"/>
</dbReference>
<dbReference type="NCBIfam" id="TIGR00513">
    <property type="entry name" value="accA"/>
    <property type="match status" value="1"/>
</dbReference>
<dbReference type="NCBIfam" id="NF041504">
    <property type="entry name" value="AccA_sub"/>
    <property type="match status" value="1"/>
</dbReference>
<dbReference type="NCBIfam" id="NF004344">
    <property type="entry name" value="PRK05724.1"/>
    <property type="match status" value="1"/>
</dbReference>
<dbReference type="PANTHER" id="PTHR42853">
    <property type="entry name" value="ACETYL-COENZYME A CARBOXYLASE CARBOXYL TRANSFERASE SUBUNIT ALPHA"/>
    <property type="match status" value="1"/>
</dbReference>
<dbReference type="PANTHER" id="PTHR42853:SF3">
    <property type="entry name" value="ACETYL-COENZYME A CARBOXYLASE CARBOXYL TRANSFERASE SUBUNIT ALPHA, CHLOROPLASTIC"/>
    <property type="match status" value="1"/>
</dbReference>
<dbReference type="Pfam" id="PF03255">
    <property type="entry name" value="ACCA"/>
    <property type="match status" value="1"/>
</dbReference>
<dbReference type="PRINTS" id="PR01069">
    <property type="entry name" value="ACCCTRFRASEA"/>
</dbReference>
<dbReference type="SUPFAM" id="SSF52096">
    <property type="entry name" value="ClpP/crotonase"/>
    <property type="match status" value="1"/>
</dbReference>
<dbReference type="PROSITE" id="PS50989">
    <property type="entry name" value="COA_CT_CTER"/>
    <property type="match status" value="1"/>
</dbReference>
<evidence type="ECO:0000255" key="1">
    <source>
        <dbReference type="HAMAP-Rule" id="MF_00823"/>
    </source>
</evidence>
<evidence type="ECO:0000255" key="2">
    <source>
        <dbReference type="PROSITE-ProRule" id="PRU01137"/>
    </source>
</evidence>
<feature type="chain" id="PRO_1000062657" description="Acetyl-coenzyme A carboxylase carboxyl transferase subunit alpha">
    <location>
        <begin position="1"/>
        <end position="315"/>
    </location>
</feature>
<feature type="domain" description="CoA carboxyltransferase C-terminal" evidence="2">
    <location>
        <begin position="39"/>
        <end position="293"/>
    </location>
</feature>
<keyword id="KW-0067">ATP-binding</keyword>
<keyword id="KW-0963">Cytoplasm</keyword>
<keyword id="KW-0275">Fatty acid biosynthesis</keyword>
<keyword id="KW-0276">Fatty acid metabolism</keyword>
<keyword id="KW-0444">Lipid biosynthesis</keyword>
<keyword id="KW-0443">Lipid metabolism</keyword>
<keyword id="KW-0547">Nucleotide-binding</keyword>
<keyword id="KW-0808">Transferase</keyword>
<organism>
    <name type="scientific">Pseudomonas entomophila (strain L48)</name>
    <dbReference type="NCBI Taxonomy" id="384676"/>
    <lineage>
        <taxon>Bacteria</taxon>
        <taxon>Pseudomonadati</taxon>
        <taxon>Pseudomonadota</taxon>
        <taxon>Gammaproteobacteria</taxon>
        <taxon>Pseudomonadales</taxon>
        <taxon>Pseudomonadaceae</taxon>
        <taxon>Pseudomonas</taxon>
    </lineage>
</organism>
<name>ACCA_PSEE4</name>
<accession>Q1I642</accession>
<proteinExistence type="inferred from homology"/>
<sequence length="315" mass="35230">MNPNFLDFEQPIADLQAKIEELRLVGNDNSLNISDEIARLQDKSSTLTESIFGNLTSWQIARLARHPRRPYTLDYIEHIFTEFEELHGDRHFSDDAAIVGGTARLNDKPVMVIGHQKGREVREKVRRNFGMPRPEGYRKACRLMEMAERFKMPILTFIDTPGAYPGIDAEERNQSEAIAWNLRVMARLKTPIIATVIGEGGSGGALAIGVCDQLNMLQYSTYSVISPEGCASILWKTADKAADAAEAMGITAERLKSLNIVDKVIQEPLGGAHRDPAKMAANVRADLIEQLDMLGKLDNDTLLKRRYDRLMSYGI</sequence>
<reference key="1">
    <citation type="journal article" date="2006" name="Nat. Biotechnol.">
        <title>Complete genome sequence of the entomopathogenic and metabolically versatile soil bacterium Pseudomonas entomophila.</title>
        <authorList>
            <person name="Vodovar N."/>
            <person name="Vallenet D."/>
            <person name="Cruveiller S."/>
            <person name="Rouy Z."/>
            <person name="Barbe V."/>
            <person name="Acosta C."/>
            <person name="Cattolico L."/>
            <person name="Jubin C."/>
            <person name="Lajus A."/>
            <person name="Segurens B."/>
            <person name="Vacherie B."/>
            <person name="Wincker P."/>
            <person name="Weissenbach J."/>
            <person name="Lemaitre B."/>
            <person name="Medigue C."/>
            <person name="Boccard F."/>
        </authorList>
    </citation>
    <scope>NUCLEOTIDE SEQUENCE [LARGE SCALE GENOMIC DNA]</scope>
    <source>
        <strain>L48</strain>
    </source>
</reference>